<dbReference type="EMBL" id="J00245">
    <property type="protein sequence ID" value="AAA59087.1"/>
    <property type="molecule type" value="Genomic_DNA"/>
</dbReference>
<dbReference type="EMBL" id="Z00001">
    <property type="protein sequence ID" value="CAA77292.1"/>
    <property type="molecule type" value="Genomic_DNA"/>
</dbReference>
<dbReference type="EMBL" id="AC243970">
    <property type="status" value="NOT_ANNOTATED_CDS"/>
    <property type="molecule type" value="Genomic_DNA"/>
</dbReference>
<dbReference type="PIR" id="A01864">
    <property type="entry name" value="K1HUAR"/>
</dbReference>
<dbReference type="PIR" id="A01870">
    <property type="entry name" value="K1HUKU"/>
</dbReference>
<dbReference type="PIR" id="A01882">
    <property type="entry name" value="K1HU12"/>
</dbReference>
<dbReference type="PIR" id="A90562">
    <property type="entry name" value="K1HUEU"/>
</dbReference>
<dbReference type="EMDB" id="EMD-0069"/>
<dbReference type="EMDB" id="EMD-14886"/>
<dbReference type="EMDB" id="EMD-14910"/>
<dbReference type="EMDB" id="EMD-15971"/>
<dbReference type="EMDB" id="EMD-21247"/>
<dbReference type="EMDB" id="EMD-25929"/>
<dbReference type="EMDB" id="EMD-28183"/>
<dbReference type="EMDB" id="EMD-30247"/>
<dbReference type="EMDB" id="EMD-30883"/>
<dbReference type="EMDB" id="EMD-30884"/>
<dbReference type="EMDB" id="EMD-30885"/>
<dbReference type="EMDB" id="EMD-30886"/>
<dbReference type="EMDB" id="EMD-32866"/>
<dbReference type="EMDB" id="EMD-32867"/>
<dbReference type="EMDB" id="EMD-32868"/>
<dbReference type="EMDB" id="EMD-33142"/>
<dbReference type="EMDB" id="EMD-33151"/>
<dbReference type="EMDB" id="EMD-33220"/>
<dbReference type="EMDB" id="EMD-33221"/>
<dbReference type="EMDB" id="EMD-33222"/>
<dbReference type="EMDB" id="EMD-35755"/>
<dbReference type="EMDB" id="EMD-38216"/>
<dbReference type="EMDB" id="EMD-39193"/>
<dbReference type="EMDB" id="EMD-41374"/>
<dbReference type="EMDB" id="EMD-41382"/>
<dbReference type="EMDB" id="EMD-41399"/>
<dbReference type="EMDB" id="EMD-41824"/>
<dbReference type="EMDB" id="EMD-41826"/>
<dbReference type="EMDB" id="EMD-8935"/>
<dbReference type="EMDB" id="EMD-8936"/>
<dbReference type="SMR" id="P01602"/>
<dbReference type="FunCoup" id="P01602">
    <property type="interactions" value="433"/>
</dbReference>
<dbReference type="IntAct" id="P01602">
    <property type="interactions" value="10"/>
</dbReference>
<dbReference type="MINT" id="P01602"/>
<dbReference type="IMGT_GENE-DB" id="IGKV1-5"/>
<dbReference type="GlyConnect" id="1388">
    <property type="glycosylation" value="3 N-Linked glycans (1 site)"/>
</dbReference>
<dbReference type="iPTMnet" id="P01602"/>
<dbReference type="PhosphoSitePlus" id="P01602"/>
<dbReference type="BioMuta" id="IGKV1-5"/>
<dbReference type="DMDM" id="125760"/>
<dbReference type="jPOST" id="P01602"/>
<dbReference type="MassIVE" id="P01602"/>
<dbReference type="ProteomicsDB" id="51404"/>
<dbReference type="Ensembl" id="ENST00000496168.1">
    <property type="protein sequence ID" value="ENSP00000420436.1"/>
    <property type="gene ID" value="ENSG00000243466.1"/>
</dbReference>
<dbReference type="Ensembl" id="ENST00000632205.1">
    <property type="protein sequence ID" value="ENSP00000488639.1"/>
    <property type="gene ID" value="ENSG00000282801.1"/>
</dbReference>
<dbReference type="UCSC" id="uc061lqk.1">
    <property type="organism name" value="human"/>
</dbReference>
<dbReference type="AGR" id="HGNC:5741"/>
<dbReference type="GeneCards" id="IGKV1-5"/>
<dbReference type="HGNC" id="HGNC:5741">
    <property type="gene designation" value="IGKV1-5"/>
</dbReference>
<dbReference type="HPA" id="ENSG00000243466">
    <property type="expression patterns" value="Tissue enhanced (intestine, lymphoid tissue, urinary bladder)"/>
</dbReference>
<dbReference type="neXtProt" id="NX_P01602"/>
<dbReference type="OpenTargets" id="ENSG00000243466"/>
<dbReference type="VEuPathDB" id="HostDB:ENSG00000243466"/>
<dbReference type="GeneTree" id="ENSGT00940000153048"/>
<dbReference type="InParanoid" id="P01602"/>
<dbReference type="OMA" id="HNDSATY"/>
<dbReference type="PAN-GO" id="P01602">
    <property type="GO annotations" value="3 GO annotations based on evolutionary models"/>
</dbReference>
<dbReference type="PhylomeDB" id="P01602"/>
<dbReference type="PathwayCommons" id="P01602"/>
<dbReference type="Reactome" id="R-HSA-166663">
    <property type="pathway name" value="Initial triggering of complement"/>
</dbReference>
<dbReference type="Reactome" id="R-HSA-173623">
    <property type="pathway name" value="Classical antibody-mediated complement activation"/>
</dbReference>
<dbReference type="Reactome" id="R-HSA-198933">
    <property type="pathway name" value="Immunoregulatory interactions between a Lymphoid and a non-Lymphoid cell"/>
</dbReference>
<dbReference type="Reactome" id="R-HSA-202733">
    <property type="pathway name" value="Cell surface interactions at the vascular wall"/>
</dbReference>
<dbReference type="Reactome" id="R-HSA-2029481">
    <property type="pathway name" value="FCGR activation"/>
</dbReference>
<dbReference type="Reactome" id="R-HSA-2029482">
    <property type="pathway name" value="Regulation of actin dynamics for phagocytic cup formation"/>
</dbReference>
<dbReference type="Reactome" id="R-HSA-2029485">
    <property type="pathway name" value="Role of phospholipids in phagocytosis"/>
</dbReference>
<dbReference type="Reactome" id="R-HSA-2168880">
    <property type="pathway name" value="Scavenging of heme from plasma"/>
</dbReference>
<dbReference type="Reactome" id="R-HSA-2454202">
    <property type="pathway name" value="Fc epsilon receptor (FCERI) signaling"/>
</dbReference>
<dbReference type="Reactome" id="R-HSA-2730905">
    <property type="pathway name" value="Role of LAT2/NTAL/LAB on calcium mobilization"/>
</dbReference>
<dbReference type="Reactome" id="R-HSA-2871796">
    <property type="pathway name" value="FCERI mediated MAPK activation"/>
</dbReference>
<dbReference type="Reactome" id="R-HSA-2871809">
    <property type="pathway name" value="FCERI mediated Ca+2 mobilization"/>
</dbReference>
<dbReference type="Reactome" id="R-HSA-2871837">
    <property type="pathway name" value="FCERI mediated NF-kB activation"/>
</dbReference>
<dbReference type="Reactome" id="R-HSA-5690714">
    <property type="pathway name" value="CD22 mediated BCR regulation"/>
</dbReference>
<dbReference type="Reactome" id="R-HSA-9664323">
    <property type="pathway name" value="FCGR3A-mediated IL10 synthesis"/>
</dbReference>
<dbReference type="Reactome" id="R-HSA-9664422">
    <property type="pathway name" value="FCGR3A-mediated phagocytosis"/>
</dbReference>
<dbReference type="Reactome" id="R-HSA-9679191">
    <property type="pathway name" value="Potential therapeutics for SARS"/>
</dbReference>
<dbReference type="Reactome" id="R-HSA-977606">
    <property type="pathway name" value="Regulation of Complement cascade"/>
</dbReference>
<dbReference type="Reactome" id="R-HSA-983695">
    <property type="pathway name" value="Antigen activates B Cell Receptor (BCR) leading to generation of second messengers"/>
</dbReference>
<dbReference type="SignaLink" id="P01602"/>
<dbReference type="ChiTaRS" id="IGKV1-5">
    <property type="organism name" value="human"/>
</dbReference>
<dbReference type="Pharos" id="P01602">
    <property type="development level" value="Tdark"/>
</dbReference>
<dbReference type="PRO" id="PR:P01602"/>
<dbReference type="Proteomes" id="UP000005640">
    <property type="component" value="Chromosome 2"/>
</dbReference>
<dbReference type="RNAct" id="P01602">
    <property type="molecule type" value="protein"/>
</dbReference>
<dbReference type="Bgee" id="ENSG00000243466">
    <property type="expression patterns" value="Expressed in rectum and 93 other cell types or tissues"/>
</dbReference>
<dbReference type="GO" id="GO:0072562">
    <property type="term" value="C:blood microparticle"/>
    <property type="evidence" value="ECO:0007005"/>
    <property type="project" value="UniProtKB"/>
</dbReference>
<dbReference type="GO" id="GO:0070062">
    <property type="term" value="C:extracellular exosome"/>
    <property type="evidence" value="ECO:0007005"/>
    <property type="project" value="UniProtKB"/>
</dbReference>
<dbReference type="GO" id="GO:0005576">
    <property type="term" value="C:extracellular region"/>
    <property type="evidence" value="ECO:0000304"/>
    <property type="project" value="Reactome"/>
</dbReference>
<dbReference type="GO" id="GO:0019814">
    <property type="term" value="C:immunoglobulin complex"/>
    <property type="evidence" value="ECO:0000318"/>
    <property type="project" value="GO_Central"/>
</dbReference>
<dbReference type="GO" id="GO:0005886">
    <property type="term" value="C:plasma membrane"/>
    <property type="evidence" value="ECO:0000304"/>
    <property type="project" value="Reactome"/>
</dbReference>
<dbReference type="GO" id="GO:0003823">
    <property type="term" value="F:antigen binding"/>
    <property type="evidence" value="ECO:0000303"/>
    <property type="project" value="UniProtKB"/>
</dbReference>
<dbReference type="GO" id="GO:0002250">
    <property type="term" value="P:adaptive immune response"/>
    <property type="evidence" value="ECO:0007669"/>
    <property type="project" value="UniProtKB-KW"/>
</dbReference>
<dbReference type="GO" id="GO:0006955">
    <property type="term" value="P:immune response"/>
    <property type="evidence" value="ECO:0000318"/>
    <property type="project" value="GO_Central"/>
</dbReference>
<dbReference type="CDD" id="cd04980">
    <property type="entry name" value="IgV_L_kappa"/>
    <property type="match status" value="1"/>
</dbReference>
<dbReference type="FunFam" id="2.60.40.10:FF:000212">
    <property type="entry name" value="Immunoglobulin kappa chain variable 12-38"/>
    <property type="match status" value="1"/>
</dbReference>
<dbReference type="Gene3D" id="2.60.40.10">
    <property type="entry name" value="Immunoglobulins"/>
    <property type="match status" value="1"/>
</dbReference>
<dbReference type="InterPro" id="IPR007110">
    <property type="entry name" value="Ig-like_dom"/>
</dbReference>
<dbReference type="InterPro" id="IPR036179">
    <property type="entry name" value="Ig-like_dom_sf"/>
</dbReference>
<dbReference type="InterPro" id="IPR013783">
    <property type="entry name" value="Ig-like_fold"/>
</dbReference>
<dbReference type="InterPro" id="IPR003599">
    <property type="entry name" value="Ig_sub"/>
</dbReference>
<dbReference type="InterPro" id="IPR013106">
    <property type="entry name" value="Ig_V-set"/>
</dbReference>
<dbReference type="InterPro" id="IPR050150">
    <property type="entry name" value="IgV_Light_Chain"/>
</dbReference>
<dbReference type="PANTHER" id="PTHR23267">
    <property type="entry name" value="IMMUNOGLOBULIN LIGHT CHAIN"/>
    <property type="match status" value="1"/>
</dbReference>
<dbReference type="Pfam" id="PF07686">
    <property type="entry name" value="V-set"/>
    <property type="match status" value="1"/>
</dbReference>
<dbReference type="SMART" id="SM00409">
    <property type="entry name" value="IG"/>
    <property type="match status" value="1"/>
</dbReference>
<dbReference type="SMART" id="SM00406">
    <property type="entry name" value="IGv"/>
    <property type="match status" value="1"/>
</dbReference>
<dbReference type="SUPFAM" id="SSF48726">
    <property type="entry name" value="Immunoglobulin"/>
    <property type="match status" value="1"/>
</dbReference>
<dbReference type="PROSITE" id="PS50835">
    <property type="entry name" value="IG_LIKE"/>
    <property type="match status" value="1"/>
</dbReference>
<accession>P01602</accession>
<accession>A0A075B6S8</accession>
<accession>P01596</accession>
<accession>P01598</accession>
<accession>P01604</accession>
<protein>
    <recommendedName>
        <fullName evidence="9 15">Immunoglobulin kappa variable 1-5</fullName>
    </recommendedName>
    <alternativeName>
        <fullName evidence="18">Ig kappa chain V-I region CAR</fullName>
    </alternativeName>
    <alternativeName>
        <fullName evidence="19">Ig kappa chain V-I region EU</fullName>
    </alternativeName>
    <alternativeName>
        <fullName evidence="14">Ig kappa chain V-I region HK102</fullName>
    </alternativeName>
    <alternativeName>
        <fullName evidence="17">Ig kappa chain V-I region Kue</fullName>
    </alternativeName>
</protein>
<reference key="1">
    <citation type="journal article" date="1980" name="Nature">
        <title>Human immunoglobulin variable region genes -- DNA sequences of two V kappa genes and a pseudogene.</title>
        <authorList>
            <person name="Bentley D.L."/>
            <person name="Rabbitts T.H."/>
        </authorList>
    </citation>
    <scope>NUCLEOTIDE SEQUENCE [GENOMIC DNA] (IMGT ALLELE IGKV1-5*01)</scope>
    <scope>VARIANT ASP-72</scope>
</reference>
<reference key="2">
    <citation type="journal article" date="1984" name="Nucleic Acids Res.">
        <title>Composite human VK genes and a model of their evolution.</title>
        <authorList>
            <person name="Jaenichen H.R."/>
            <person name="Pech M."/>
            <person name="Lindenmaier W."/>
            <person name="Wildgruber N."/>
            <person name="Zachau H.G."/>
        </authorList>
    </citation>
    <scope>NUCLEOTIDE SEQUENCE [GENOMIC DNA] (IMGT ALLELE IGKV1-5*01)</scope>
    <scope>VARIANT ASP-72</scope>
</reference>
<reference key="3">
    <citation type="journal article" date="2005" name="Nature">
        <title>Generation and annotation of the DNA sequences of human chromosomes 2 and 4.</title>
        <authorList>
            <person name="Hillier L.W."/>
            <person name="Graves T.A."/>
            <person name="Fulton R.S."/>
            <person name="Fulton L.A."/>
            <person name="Pepin K.H."/>
            <person name="Minx P."/>
            <person name="Wagner-McPherson C."/>
            <person name="Layman D."/>
            <person name="Wylie K."/>
            <person name="Sekhon M."/>
            <person name="Becker M.C."/>
            <person name="Fewell G.A."/>
            <person name="Delehaunty K.D."/>
            <person name="Miner T.L."/>
            <person name="Nash W.E."/>
            <person name="Kremitzki C."/>
            <person name="Oddy L."/>
            <person name="Du H."/>
            <person name="Sun H."/>
            <person name="Bradshaw-Cordum H."/>
            <person name="Ali J."/>
            <person name="Carter J."/>
            <person name="Cordes M."/>
            <person name="Harris A."/>
            <person name="Isak A."/>
            <person name="van Brunt A."/>
            <person name="Nguyen C."/>
            <person name="Du F."/>
            <person name="Courtney L."/>
            <person name="Kalicki J."/>
            <person name="Ozersky P."/>
            <person name="Abbott S."/>
            <person name="Armstrong J."/>
            <person name="Belter E.A."/>
            <person name="Caruso L."/>
            <person name="Cedroni M."/>
            <person name="Cotton M."/>
            <person name="Davidson T."/>
            <person name="Desai A."/>
            <person name="Elliott G."/>
            <person name="Erb T."/>
            <person name="Fronick C."/>
            <person name="Gaige T."/>
            <person name="Haakenson W."/>
            <person name="Haglund K."/>
            <person name="Holmes A."/>
            <person name="Harkins R."/>
            <person name="Kim K."/>
            <person name="Kruchowski S.S."/>
            <person name="Strong C.M."/>
            <person name="Grewal N."/>
            <person name="Goyea E."/>
            <person name="Hou S."/>
            <person name="Levy A."/>
            <person name="Martinka S."/>
            <person name="Mead K."/>
            <person name="McLellan M.D."/>
            <person name="Meyer R."/>
            <person name="Randall-Maher J."/>
            <person name="Tomlinson C."/>
            <person name="Dauphin-Kohlberg S."/>
            <person name="Kozlowicz-Reilly A."/>
            <person name="Shah N."/>
            <person name="Swearengen-Shahid S."/>
            <person name="Snider J."/>
            <person name="Strong J.T."/>
            <person name="Thompson J."/>
            <person name="Yoakum M."/>
            <person name="Leonard S."/>
            <person name="Pearman C."/>
            <person name="Trani L."/>
            <person name="Radionenko M."/>
            <person name="Waligorski J.E."/>
            <person name="Wang C."/>
            <person name="Rock S.M."/>
            <person name="Tin-Wollam A.-M."/>
            <person name="Maupin R."/>
            <person name="Latreille P."/>
            <person name="Wendl M.C."/>
            <person name="Yang S.-P."/>
            <person name="Pohl C."/>
            <person name="Wallis J.W."/>
            <person name="Spieth J."/>
            <person name="Bieri T.A."/>
            <person name="Berkowicz N."/>
            <person name="Nelson J.O."/>
            <person name="Osborne J."/>
            <person name="Ding L."/>
            <person name="Meyer R."/>
            <person name="Sabo A."/>
            <person name="Shotland Y."/>
            <person name="Sinha P."/>
            <person name="Wohldmann P.E."/>
            <person name="Cook L.L."/>
            <person name="Hickenbotham M.T."/>
            <person name="Eldred J."/>
            <person name="Williams D."/>
            <person name="Jones T.A."/>
            <person name="She X."/>
            <person name="Ciccarelli F.D."/>
            <person name="Izaurralde E."/>
            <person name="Taylor J."/>
            <person name="Schmutz J."/>
            <person name="Myers R.M."/>
            <person name="Cox D.R."/>
            <person name="Huang X."/>
            <person name="McPherson J.D."/>
            <person name="Mardis E.R."/>
            <person name="Clifton S.W."/>
            <person name="Warren W.C."/>
            <person name="Chinwalla A.T."/>
            <person name="Eddy S.R."/>
            <person name="Marra M.A."/>
            <person name="Ovcharenko I."/>
            <person name="Furey T.S."/>
            <person name="Miller W."/>
            <person name="Eichler E.E."/>
            <person name="Bork P."/>
            <person name="Suyama M."/>
            <person name="Torrents D."/>
            <person name="Waterston R.H."/>
            <person name="Wilson R.K."/>
        </authorList>
    </citation>
    <scope>NUCLEOTIDE SEQUENCE [LARGE SCALE GENOMIC DNA] (IMGT ALLELE IGKV1-5*03)</scope>
</reference>
<reference key="4">
    <citation type="journal article" date="1970" name="Biochemistry">
        <title>The covalent structure of a human gamma G-immunoglobulin. VI. Amino acid sequence of the light chain.</title>
        <authorList>
            <person name="Gottlieb P.D."/>
            <person name="Cunningham B.A."/>
            <person name="Rutishauser U."/>
            <person name="Edelman G.M."/>
        </authorList>
    </citation>
    <scope>PROTEIN SEQUENCE OF 23-117</scope>
</reference>
<reference key="5">
    <citation type="journal article" date="1974" name="Eur. J. Biochem.">
        <title>Primary structure of kappa light chain from a human myeloma protein.</title>
        <authorList>
            <person name="Milstein C.P."/>
            <person name="Deverson E.V."/>
        </authorList>
    </citation>
    <scope>PROTEIN SEQUENCE OF 23-117</scope>
</reference>
<reference key="6">
    <citation type="journal article" date="1979" name="Hoppe-Seyler's Z. Physiol. Chem.">
        <title>The primary structure of the Bence-Jones protein Kue. The amino acid sequence of the variable part of a human L-chain of the kappa-type.</title>
        <authorList>
            <person name="Eulitz M."/>
            <person name="Kley H.-P."/>
            <person name="Zeitler H.-J."/>
        </authorList>
    </citation>
    <scope>PROTEIN SEQUENCE OF 23-117</scope>
</reference>
<reference key="7">
    <citation type="journal article" date="1970" name="Biochemistry">
        <title>The covalent structure of a human gamma G-immunoglobulin. X. Intrachain disulfide bonds.</title>
        <authorList>
            <person name="Gall W.E."/>
            <person name="Edelman G.M."/>
        </authorList>
    </citation>
    <scope>DISULFIDE BOND</scope>
</reference>
<reference key="8">
    <citation type="journal article" date="1999" name="Exp. Clin. Immunogenet.">
        <title>Protein displays of the human immunoglobulin heavy, kappa and lambda variable and joining regions.</title>
        <authorList>
            <person name="Scaviner D."/>
            <person name="Barbie V."/>
            <person name="Ruiz M."/>
            <person name="Lefranc M.P."/>
        </authorList>
    </citation>
    <scope>REGION</scope>
</reference>
<reference key="9">
    <citation type="journal article" date="2001" name="Exp. Clin. Immunogenet.">
        <title>Nomenclature of the human immunoglobulin kappa (IGK) genes.</title>
        <authorList>
            <person name="Lefranc M.P."/>
        </authorList>
    </citation>
    <scope>NOMEMCLATURE</scope>
</reference>
<reference key="10">
    <citation type="book" date="2001" name="The Immunoglobulin FactsBook.">
        <title>The Immunoglobulin FactsBook.</title>
        <editorList>
            <person name="Lefranc M.P."/>
            <person name="Lefranc G."/>
        </editorList>
        <authorList>
            <person name="Lefranc M.P."/>
            <person name="Lefranc G."/>
        </authorList>
    </citation>
    <scope>NOMENCLATURE</scope>
</reference>
<reference key="11">
    <citation type="journal article" date="2007" name="Annu. Rev. Genet.">
        <title>Immunoglobulin somatic hypermutation.</title>
        <authorList>
            <person name="Teng G."/>
            <person name="Papavasiliou F.N."/>
        </authorList>
    </citation>
    <scope>REVIEW ON SOMATIC HYPERMUTATION</scope>
</reference>
<reference key="12">
    <citation type="journal article" date="2010" name="J. Allergy Clin. Immunol.">
        <title>Structure and function of immunoglobulins.</title>
        <authorList>
            <person name="Schroeder H.W. Jr."/>
            <person name="Cavacini L."/>
        </authorList>
    </citation>
    <scope>REVIEW ON IMMUNOGLOBULINS</scope>
</reference>
<reference key="13">
    <citation type="journal article" date="2012" name="Nat. Rev. Immunol.">
        <title>Molecular programming of B cell memory.</title>
        <authorList>
            <person name="McHeyzer-Williams M."/>
            <person name="Okitsu S."/>
            <person name="Wang N."/>
            <person name="McHeyzer-Williams L."/>
        </authorList>
    </citation>
    <scope>REVIEW ON FUNCTION</scope>
</reference>
<reference key="14">
    <citation type="journal article" date="2014" name="Front. Immunol.">
        <title>Immunoglobulin and T Cell Receptor Genes: IMGT((R)) and the Birth and Rise of Immunoinformatics.</title>
        <authorList>
            <person name="Lefranc M.P."/>
        </authorList>
    </citation>
    <scope>NOMENCLATURE</scope>
</reference>
<sequence length="117" mass="12782">MDMRVPAQLLGLLLLWLPGAKCDIQMTQSPSTLSASVGDRVTITCRASQSISSWLAWYQQKPGKAPKLLIYKASSLESGVPSRFSGSGSGTEFTLTISSLQPDDFATYYCQQYNSYS</sequence>
<gene>
    <name evidence="9 15" type="primary">IGKV1-5</name>
</gene>
<feature type="signal peptide" evidence="2 3 5">
    <location>
        <begin position="1"/>
        <end position="22"/>
    </location>
</feature>
<feature type="chain" id="PRO_0000015169" description="Immunoglobulin kappa variable 1-5" evidence="2 3 5">
    <location>
        <begin position="23"/>
        <end position="117"/>
    </location>
</feature>
<feature type="domain" description="Ig-like" evidence="1">
    <location>
        <begin position="24"/>
        <end position="117" status="greater than"/>
    </location>
</feature>
<feature type="region of interest" description="Framework-1" evidence="8">
    <location>
        <begin position="23"/>
        <end position="45"/>
    </location>
</feature>
<feature type="region of interest" description="Complementarity-determining-1" evidence="8">
    <location>
        <begin position="46"/>
        <end position="56"/>
    </location>
</feature>
<feature type="region of interest" description="Framework-2" evidence="8">
    <location>
        <begin position="57"/>
        <end position="71"/>
    </location>
</feature>
<feature type="region of interest" description="Complementarity-determining-2" evidence="8">
    <location>
        <begin position="72"/>
        <end position="78"/>
    </location>
</feature>
<feature type="region of interest" description="Framework-3" evidence="8">
    <location>
        <begin position="79"/>
        <end position="110"/>
    </location>
</feature>
<feature type="region of interest" description="Complementarity-determining-3" evidence="8">
    <location>
        <begin position="111"/>
        <end position="117" status="greater than"/>
    </location>
</feature>
<feature type="disulfide bond" evidence="1 4">
    <location>
        <begin position="45"/>
        <end position="110"/>
    </location>
</feature>
<feature type="sequence variant" id="VAR_073349" description="In IMGT allele IGKV1-5*01; requires 2 nucleotide substitutions." evidence="6 7">
    <original>K</original>
    <variation>D</variation>
    <location>
        <position position="72"/>
    </location>
</feature>
<feature type="sequence conflict" description="In Ref. 6; AA sequence." evidence="16" ref="6">
    <original>LS</original>
    <variation>QP</variation>
    <location>
        <begin position="33"/>
        <end position="34"/>
    </location>
</feature>
<feature type="sequence conflict" description="In Ref. 5; AA sequence." evidence="16" ref="5">
    <original>T</original>
    <variation>A</variation>
    <location>
        <position position="42"/>
    </location>
</feature>
<feature type="sequence conflict" description="In Ref. 5; AA sequence." evidence="16" ref="5">
    <original>S</original>
    <variation>N</variation>
    <location>
        <position position="50"/>
    </location>
</feature>
<feature type="sequence conflict" description="In Ref. 6; AA sequence." evidence="16" ref="6">
    <original>SS</original>
    <variation>NI</variation>
    <location>
        <begin position="52"/>
        <end position="53"/>
    </location>
</feature>
<feature type="sequence conflict" description="In Ref. 4; AA sequence." evidence="16" ref="4">
    <original>SS</original>
    <variation>NT</variation>
    <location>
        <begin position="52"/>
        <end position="53"/>
    </location>
</feature>
<feature type="sequence conflict" description="In Ref. 6; AA sequence." evidence="16" ref="6">
    <original>G</original>
    <variation>E</variation>
    <location>
        <position position="63"/>
    </location>
</feature>
<feature type="sequence conflict" description="In Ref. 5; AA sequence." evidence="16" ref="5">
    <original>L</original>
    <variation>V</variation>
    <location>
        <position position="68"/>
    </location>
</feature>
<feature type="sequence conflict" description="In Ref. 4; AA sequence." evidence="16" ref="4">
    <original>I</original>
    <variation>M</variation>
    <location>
        <position position="70"/>
    </location>
</feature>
<feature type="sequence conflict" description="In Ref. 5; AA sequence." evidence="16" ref="5">
    <original>A</original>
    <variation>S</variation>
    <location>
        <position position="73"/>
    </location>
</feature>
<feature type="sequence conflict" description="In Ref. 6; AA sequence." evidence="16" ref="6">
    <original>SLES</original>
    <variation>TLET</variation>
    <location>
        <begin position="75"/>
        <end position="78"/>
    </location>
</feature>
<feature type="sequence conflict" description="In Ref. 4; AA sequence." evidence="16" ref="4">
    <original>S</original>
    <variation>I</variation>
    <location>
        <position position="85"/>
    </location>
</feature>
<feature type="sequence conflict" description="In Ref. 5; AA sequence." evidence="16" ref="5">
    <original>E</original>
    <variation>D</variation>
    <location>
        <position position="92"/>
    </location>
</feature>
<feature type="sequence conflict" description="In Ref. 6; AA sequence." evidence="16" ref="6">
    <original>S</original>
    <variation>N</variation>
    <location>
        <position position="98"/>
    </location>
</feature>
<feature type="sequence conflict" description="In Ref. 6; AA sequence." evidence="16" ref="6">
    <original>NSYS</original>
    <variation>SRYP</variation>
    <location>
        <begin position="114"/>
        <end position="117"/>
    </location>
</feature>
<feature type="sequence conflict" description="In Ref. 5; AA sequence." evidence="16" ref="5">
    <original>SYS</original>
    <variation>TFF</variation>
    <location>
        <begin position="115"/>
        <end position="117"/>
    </location>
</feature>
<feature type="sequence conflict" description="In Ref. 4; AA sequence." evidence="16" ref="4">
    <original>Y</original>
    <variation>D</variation>
    <location>
        <position position="116"/>
    </location>
</feature>
<feature type="non-terminal residue">
    <location>
        <position position="117"/>
    </location>
</feature>
<name>KV105_HUMAN</name>
<comment type="function">
    <text evidence="10 11 12 13">V region of the variable domain of immunoglobulin light chains that participates in the antigen recognition (PubMed:24600447). Immunoglobulins, also known as antibodies, are membrane-bound or secreted glycoproteins produced by B lymphocytes. In the recognition phase of humoral immunity, the membrane-bound immunoglobulins serve as receptors which, upon binding of a specific antigen, trigger the clonal expansion and differentiation of B lymphocytes into immunoglobulins-secreting plasma cells. Secreted immunoglobulins mediate the effector phase of humoral immunity, which results in the elimination of bound antigens (PubMed:20176268, PubMed:22158414). The antigen binding site is formed by the variable domain of one heavy chain, together with that of its associated light chain. Thus, each immunoglobulin has two antigen binding sites with remarkable affinity for a particular antigen. The variable domains are assembled by a process called V-(D)-J rearrangement and can then be subjected to somatic hypermutations which, after exposure to antigen and selection, allow affinity maturation for a particular antigen (PubMed:17576170, PubMed:20176268).</text>
</comment>
<comment type="subunit">
    <text evidence="11">Immunoglobulins are composed of two identical heavy chains and two identical light chains; disulfide-linked.</text>
</comment>
<comment type="subcellular location">
    <subcellularLocation>
        <location evidence="11 12">Secreted</location>
    </subcellularLocation>
    <subcellularLocation>
        <location evidence="11 12">Cell membrane</location>
    </subcellularLocation>
</comment>
<comment type="polymorphism">
    <text>There are several alleles. The sequence shown is that of IMGT allele IGKV1-5*03.</text>
</comment>
<comment type="caution">
    <text evidence="16">For an example of a full-length immunoglobulin kappa light chain see AC P0DOX7.</text>
</comment>
<proteinExistence type="evidence at protein level"/>
<keyword id="KW-1064">Adaptive immunity</keyword>
<keyword id="KW-1003">Cell membrane</keyword>
<keyword id="KW-0903">Direct protein sequencing</keyword>
<keyword id="KW-1015">Disulfide bond</keyword>
<keyword id="KW-0391">Immunity</keyword>
<keyword id="KW-1280">Immunoglobulin</keyword>
<keyword id="KW-0393">Immunoglobulin domain</keyword>
<keyword id="KW-0472">Membrane</keyword>
<keyword id="KW-1267">Proteomics identification</keyword>
<keyword id="KW-1185">Reference proteome</keyword>
<keyword id="KW-0964">Secreted</keyword>
<keyword id="KW-0732">Signal</keyword>
<evidence type="ECO:0000255" key="1">
    <source>
        <dbReference type="PROSITE-ProRule" id="PRU00114"/>
    </source>
</evidence>
<evidence type="ECO:0000269" key="2">
    <source>
    </source>
</evidence>
<evidence type="ECO:0000269" key="3">
    <source>
    </source>
</evidence>
<evidence type="ECO:0000269" key="4">
    <source>
    </source>
</evidence>
<evidence type="ECO:0000269" key="5">
    <source>
    </source>
</evidence>
<evidence type="ECO:0000269" key="6">
    <source>
    </source>
</evidence>
<evidence type="ECO:0000269" key="7">
    <source>
    </source>
</evidence>
<evidence type="ECO:0000303" key="8">
    <source>
    </source>
</evidence>
<evidence type="ECO:0000303" key="9">
    <source>
    </source>
</evidence>
<evidence type="ECO:0000303" key="10">
    <source>
    </source>
</evidence>
<evidence type="ECO:0000303" key="11">
    <source>
    </source>
</evidence>
<evidence type="ECO:0000303" key="12">
    <source>
    </source>
</evidence>
<evidence type="ECO:0000303" key="13">
    <source>
    </source>
</evidence>
<evidence type="ECO:0000303" key="14">
    <source>
    </source>
</evidence>
<evidence type="ECO:0000303" key="15">
    <source ref="10"/>
</evidence>
<evidence type="ECO:0000305" key="16"/>
<evidence type="ECO:0000305" key="17">
    <source>
    </source>
</evidence>
<evidence type="ECO:0000305" key="18">
    <source>
    </source>
</evidence>
<evidence type="ECO:0000305" key="19">
    <source>
    </source>
</evidence>
<organism>
    <name type="scientific">Homo sapiens</name>
    <name type="common">Human</name>
    <dbReference type="NCBI Taxonomy" id="9606"/>
    <lineage>
        <taxon>Eukaryota</taxon>
        <taxon>Metazoa</taxon>
        <taxon>Chordata</taxon>
        <taxon>Craniata</taxon>
        <taxon>Vertebrata</taxon>
        <taxon>Euteleostomi</taxon>
        <taxon>Mammalia</taxon>
        <taxon>Eutheria</taxon>
        <taxon>Euarchontoglires</taxon>
        <taxon>Primates</taxon>
        <taxon>Haplorrhini</taxon>
        <taxon>Catarrhini</taxon>
        <taxon>Hominidae</taxon>
        <taxon>Homo</taxon>
    </lineage>
</organism>